<protein>
    <recommendedName>
        <fullName evidence="19">Adhesion G protein-coupled receptor B1</fullName>
    </recommendedName>
    <alternativeName>
        <fullName evidence="17">Brain-specific angiogenesis inhibitor 1</fullName>
    </alternativeName>
    <component>
        <recommendedName>
            <fullName evidence="2">Vasculostatin-120</fullName>
            <shortName evidence="2">Vstat120</shortName>
        </recommendedName>
    </component>
    <component>
        <recommendedName>
            <fullName evidence="2">Vasculostatin-40</fullName>
            <shortName evidence="2">Vstat-40</shortName>
        </recommendedName>
    </component>
</protein>
<sequence>MRGQAAAPGPIWILAPLLLLLLLLGRWARAASGADIGPGTEQCTTLVQGKFFGYFSAAAVFPANASRCSWTLRNPDPRRYTLYMKVAKAPAPCSGPGRVRTYQFDSFLESTRTYLGVESFDEVLRLCDSSAPLAFLQASKQFLQMQRQQPPQDGDLGPQGEFPSSSDDFSVEYLVVGNRNPSHAACQMLCRWLDACLAGSRSSHPCGIMQTPCACLGGDVGDPASSPLVPRGDVCLRDGVAGGPENCLTSLTQDRGGHGSAGGWKLWSLWGECTRDCGGGLQTRTRTCLPTLGVEGGGCEGVLEEGRLCNRKACGPTGRSSSRSQSLRSTDARRREEFGDELQQFGFPSPQTGDPAAEEWSPWSVCSSTCGEGWQTRTRFCVSSSYSTQCSGPLREQRLCNNSAVCPVHGAWDEWSPWSLCSSTCGRGFRDRTRTCRPPQFGGNPCEGPEKQTKFCNIALCPGRAVDGNWNEWSSWSTCSASCSQGRQQRTRECNGPSYGGAECQGHWVETRDCFLQQCPVDGKWQAWASWGSCSVTCGGGSQRRERVCSGPFFGGAACQGPQDEYRQCGAQRCPEPHEICDEDNFGAVVWKETPAGEVAAVRCPRNATGLILRRCELDEEGIAFWEPPTYIRCVSIDYRNIQMMTREHLAKAQRGLPGEGVSEVIQTLLEISQDGTSYSGDLLSTIDVLRNMTEIFRRAYYSPTPGDVQNFVQIISNLLAEENRDKWEEAQLMGPNAKELFRLVEDFVDVIGFRMKDLRDAYQVTDNLVLSIHKLPASGATDISFPMKGWRATGDWAKVPEDRVTVSKSVFSTGLAEADDSSVFVVGTVLYRNLGSFLALQRNTTVLNSKVISVTVKPPPRSLLTPLEIEFAHMYNGTTNQTCILWDETDGPSSSAPPQLGPWSWRGCRTVPLDALRTRCLCDRLSTFAILAQLSADATMDKVTVPSVTLIVGCGVSSLTLLMLVIIYVSVWRYIRSERSVILINFCLSIISSNALILIGQTQTRNKVVCTLVAAFLHFFFLSSFCWVLTEAWQSYMAVTGRLRSRLVRKRFLCLGWGLPALVVAISVGFTKAKGYSTMNYCWLSLEGGLLYAFVGPAAAVVLVNMVIGILVFNKLVSKDGITDKKLKERAGASLWSSCVVLPLLALTWMSAVLAVTDRRSALFQILFAVFDSLEGFVIVMVHCILRREVQDAVKCRVVDRQEEGNGDSGGSFQNGHAQLMTDFEKDVDLACRSVLNKDIAACRTATITGTFKRPSLPEEEKMKLAKGPPPTFNSLPANVSKLHLHGSPRYPGGPLPDFPNHSLTLKKDKAPKSSFIGDGDIFKKLDSELSRAQEKALDTSYVILPTATATLRPKPKEEPKYSINIDQMPQTRLIHLSMAPDASFPTRSPPAREPPGGAPPEVPPVQPPPPPPPPPPPPQQPIPPPPTLEPAPPSLGDTGEPAAHPGPSSGAGAKNENVATLSVSSLERRKSRYAELDFEKIMHTRKRHQDMFQDLNRKLQHAAEKEKEVPGADSKPEKQQTPNKRAWESLRKPHGTPAWVKKELEPLPPSPLELRSVEWEKAGATIPLVGQDIIDLQTEV</sequence>
<dbReference type="EMBL" id="AY168408">
    <property type="protein sequence ID" value="AAN86966.1"/>
    <property type="molecule type" value="mRNA"/>
</dbReference>
<dbReference type="EMBL" id="AK147494">
    <property type="protein sequence ID" value="BAE27949.1"/>
    <property type="molecule type" value="mRNA"/>
</dbReference>
<dbReference type="EMBL" id="AK147456">
    <property type="protein sequence ID" value="BAE27923.1"/>
    <property type="molecule type" value="mRNA"/>
</dbReference>
<dbReference type="EMBL" id="AK147459">
    <property type="protein sequence ID" value="BAE27926.1"/>
    <property type="molecule type" value="mRNA"/>
</dbReference>
<dbReference type="EMBL" id="AK147607">
    <property type="protein sequence ID" value="BAE28021.1"/>
    <property type="molecule type" value="mRNA"/>
</dbReference>
<dbReference type="CCDS" id="CCDS70635.1">
    <molecule id="Q3UHD1-1"/>
</dbReference>
<dbReference type="RefSeq" id="NP_778156.2">
    <molecule id="Q3UHD1-1"/>
    <property type="nucleotide sequence ID" value="NM_174991.3"/>
</dbReference>
<dbReference type="PDB" id="6IDX">
    <property type="method" value="X-ray"/>
    <property type="resolution" value="1.70 A"/>
    <property type="chains" value="C=1471-1495"/>
</dbReference>
<dbReference type="PDB" id="7R84">
    <property type="method" value="X-ray"/>
    <property type="resolution" value="1.34 A"/>
    <property type="chains" value="A/B/C/D=409-462"/>
</dbReference>
<dbReference type="PDB" id="7R85">
    <property type="method" value="X-ray"/>
    <property type="resolution" value="1.45 A"/>
    <property type="chains" value="A=409-462"/>
</dbReference>
<dbReference type="PDB" id="7R86">
    <property type="method" value="X-ray"/>
    <property type="resolution" value="1.65 A"/>
    <property type="chains" value="C/D=409-462"/>
</dbReference>
<dbReference type="PDBsum" id="6IDX"/>
<dbReference type="PDBsum" id="7R84"/>
<dbReference type="PDBsum" id="7R85"/>
<dbReference type="PDBsum" id="7R86"/>
<dbReference type="SMR" id="Q3UHD1"/>
<dbReference type="BioGRID" id="223612">
    <property type="interactions" value="8"/>
</dbReference>
<dbReference type="DIP" id="DIP-37711N"/>
<dbReference type="FunCoup" id="Q3UHD1">
    <property type="interactions" value="404"/>
</dbReference>
<dbReference type="IntAct" id="Q3UHD1">
    <property type="interactions" value="4"/>
</dbReference>
<dbReference type="STRING" id="10090.ENSMUSP00000046097"/>
<dbReference type="GlyCosmos" id="Q3UHD1">
    <property type="glycosylation" value="7 sites, No reported glycans"/>
</dbReference>
<dbReference type="GlyGen" id="Q3UHD1">
    <property type="glycosylation" value="8 sites, 4 N-linked glycans (4 sites)"/>
</dbReference>
<dbReference type="iPTMnet" id="Q3UHD1"/>
<dbReference type="PhosphoSitePlus" id="Q3UHD1"/>
<dbReference type="jPOST" id="Q3UHD1"/>
<dbReference type="PaxDb" id="10090-ENSMUSP00000046097"/>
<dbReference type="PeptideAtlas" id="Q3UHD1"/>
<dbReference type="ProteomicsDB" id="296086">
    <molecule id="Q3UHD1-1"/>
</dbReference>
<dbReference type="Antibodypedia" id="7346">
    <property type="antibodies" value="399 antibodies from 32 providers"/>
</dbReference>
<dbReference type="DNASU" id="107831"/>
<dbReference type="Ensembl" id="ENSMUST00000042035.16">
    <molecule id="Q3UHD1-1"/>
    <property type="protein sequence ID" value="ENSMUSP00000046097.10"/>
    <property type="gene ID" value="ENSMUSG00000034730.19"/>
</dbReference>
<dbReference type="GeneID" id="107831"/>
<dbReference type="KEGG" id="mmu:107831"/>
<dbReference type="UCSC" id="uc007wco.1">
    <molecule id="Q3UHD1-1"/>
    <property type="organism name" value="mouse"/>
</dbReference>
<dbReference type="AGR" id="MGI:1933736"/>
<dbReference type="CTD" id="575"/>
<dbReference type="MGI" id="MGI:1933736">
    <property type="gene designation" value="Adgrb1"/>
</dbReference>
<dbReference type="VEuPathDB" id="HostDB:ENSMUSG00000034730"/>
<dbReference type="eggNOG" id="ENOG502QRTN">
    <property type="taxonomic scope" value="Eukaryota"/>
</dbReference>
<dbReference type="GeneTree" id="ENSGT00940000157432"/>
<dbReference type="HOGENOM" id="CLU_003751_1_0_1"/>
<dbReference type="InParanoid" id="Q3UHD1"/>
<dbReference type="OMA" id="SAMPRWG"/>
<dbReference type="OrthoDB" id="5989160at2759"/>
<dbReference type="PhylomeDB" id="Q3UHD1"/>
<dbReference type="TreeFam" id="TF331634"/>
<dbReference type="BioGRID-ORCS" id="107831">
    <property type="hits" value="3 hits in 72 CRISPR screens"/>
</dbReference>
<dbReference type="CD-CODE" id="CE726F99">
    <property type="entry name" value="Postsynaptic density"/>
</dbReference>
<dbReference type="PRO" id="PR:Q3UHD1"/>
<dbReference type="Proteomes" id="UP000000589">
    <property type="component" value="Chromosome 15"/>
</dbReference>
<dbReference type="RNAct" id="Q3UHD1">
    <property type="molecule type" value="protein"/>
</dbReference>
<dbReference type="Bgee" id="ENSMUSG00000034730">
    <property type="expression patterns" value="Expressed in superior frontal gyrus and 130 other cell types or tissues"/>
</dbReference>
<dbReference type="ExpressionAtlas" id="Q3UHD1">
    <property type="expression patterns" value="baseline and differential"/>
</dbReference>
<dbReference type="GO" id="GO:0030425">
    <property type="term" value="C:dendrite"/>
    <property type="evidence" value="ECO:0000314"/>
    <property type="project" value="UniProtKB"/>
</dbReference>
<dbReference type="GO" id="GO:0043197">
    <property type="term" value="C:dendritic spine"/>
    <property type="evidence" value="ECO:0007669"/>
    <property type="project" value="UniProtKB-SubCell"/>
</dbReference>
<dbReference type="GO" id="GO:0005615">
    <property type="term" value="C:extracellular space"/>
    <property type="evidence" value="ECO:0000250"/>
    <property type="project" value="UniProtKB"/>
</dbReference>
<dbReference type="GO" id="GO:0005925">
    <property type="term" value="C:focal adhesion"/>
    <property type="evidence" value="ECO:0000314"/>
    <property type="project" value="UniProtKB"/>
</dbReference>
<dbReference type="GO" id="GO:0048471">
    <property type="term" value="C:perinuclear region of cytoplasm"/>
    <property type="evidence" value="ECO:0000250"/>
    <property type="project" value="UniProtKB"/>
</dbReference>
<dbReference type="GO" id="GO:0001891">
    <property type="term" value="C:phagocytic cup"/>
    <property type="evidence" value="ECO:0000314"/>
    <property type="project" value="UniProtKB"/>
</dbReference>
<dbReference type="GO" id="GO:0005886">
    <property type="term" value="C:plasma membrane"/>
    <property type="evidence" value="ECO:0000314"/>
    <property type="project" value="UniProtKB"/>
</dbReference>
<dbReference type="GO" id="GO:0014069">
    <property type="term" value="C:postsynaptic density"/>
    <property type="evidence" value="ECO:0000314"/>
    <property type="project" value="UniProtKB"/>
</dbReference>
<dbReference type="GO" id="GO:0004930">
    <property type="term" value="F:G protein-coupled receptor activity"/>
    <property type="evidence" value="ECO:0000250"/>
    <property type="project" value="UniProtKB"/>
</dbReference>
<dbReference type="GO" id="GO:0001530">
    <property type="term" value="F:lipopolysaccharide binding"/>
    <property type="evidence" value="ECO:0000314"/>
    <property type="project" value="UniProtKB"/>
</dbReference>
<dbReference type="GO" id="GO:0030165">
    <property type="term" value="F:PDZ domain binding"/>
    <property type="evidence" value="ECO:0000353"/>
    <property type="project" value="UniProtKB"/>
</dbReference>
<dbReference type="GO" id="GO:0001786">
    <property type="term" value="F:phosphatidylserine binding"/>
    <property type="evidence" value="ECO:0000314"/>
    <property type="project" value="UniProtKB"/>
</dbReference>
<dbReference type="GO" id="GO:0004888">
    <property type="term" value="F:transmembrane signaling receptor activity"/>
    <property type="evidence" value="ECO:0000314"/>
    <property type="project" value="UniProtKB"/>
</dbReference>
<dbReference type="GO" id="GO:0007166">
    <property type="term" value="P:cell surface receptor signaling pathway"/>
    <property type="evidence" value="ECO:0007669"/>
    <property type="project" value="InterPro"/>
</dbReference>
<dbReference type="GO" id="GO:0050829">
    <property type="term" value="P:defense response to Gram-negative bacterium"/>
    <property type="evidence" value="ECO:0000315"/>
    <property type="project" value="UniProtKB"/>
</dbReference>
<dbReference type="GO" id="GO:0043652">
    <property type="term" value="P:engulfment of apoptotic cell"/>
    <property type="evidence" value="ECO:0000314"/>
    <property type="project" value="UniProtKB"/>
</dbReference>
<dbReference type="GO" id="GO:0045087">
    <property type="term" value="P:innate immune response"/>
    <property type="evidence" value="ECO:0007669"/>
    <property type="project" value="UniProtKB-KW"/>
</dbReference>
<dbReference type="GO" id="GO:0007517">
    <property type="term" value="P:muscle organ development"/>
    <property type="evidence" value="ECO:0007669"/>
    <property type="project" value="UniProtKB-KW"/>
</dbReference>
<dbReference type="GO" id="GO:0016525">
    <property type="term" value="P:negative regulation of angiogenesis"/>
    <property type="evidence" value="ECO:0000250"/>
    <property type="project" value="UniProtKB"/>
</dbReference>
<dbReference type="GO" id="GO:0010596">
    <property type="term" value="P:negative regulation of endothelial cell migration"/>
    <property type="evidence" value="ECO:0000250"/>
    <property type="project" value="UniProtKB"/>
</dbReference>
<dbReference type="GO" id="GO:0042177">
    <property type="term" value="P:negative regulation of protein catabolic process"/>
    <property type="evidence" value="ECO:0000315"/>
    <property type="project" value="UniProtKB"/>
</dbReference>
<dbReference type="GO" id="GO:0031397">
    <property type="term" value="P:negative regulation of protein ubiquitination"/>
    <property type="evidence" value="ECO:0000315"/>
    <property type="project" value="UniProtKB"/>
</dbReference>
<dbReference type="GO" id="GO:0007399">
    <property type="term" value="P:nervous system development"/>
    <property type="evidence" value="ECO:0007669"/>
    <property type="project" value="UniProtKB-KW"/>
</dbReference>
<dbReference type="GO" id="GO:0006911">
    <property type="term" value="P:phagocytosis, engulfment"/>
    <property type="evidence" value="ECO:0000315"/>
    <property type="project" value="UniProtKB"/>
</dbReference>
<dbReference type="GO" id="GO:0006910">
    <property type="term" value="P:phagocytosis, recognition"/>
    <property type="evidence" value="ECO:0000315"/>
    <property type="project" value="UniProtKB"/>
</dbReference>
<dbReference type="GO" id="GO:1901741">
    <property type="term" value="P:positive regulation of myoblast fusion"/>
    <property type="evidence" value="ECO:0000315"/>
    <property type="project" value="UniProtKB"/>
</dbReference>
<dbReference type="GO" id="GO:1903428">
    <property type="term" value="P:positive regulation of reactive oxygen species biosynthetic process"/>
    <property type="evidence" value="ECO:0000250"/>
    <property type="project" value="UniProtKB"/>
</dbReference>
<dbReference type="GO" id="GO:0051965">
    <property type="term" value="P:positive regulation of synapse assembly"/>
    <property type="evidence" value="ECO:0000314"/>
    <property type="project" value="MGI"/>
</dbReference>
<dbReference type="GO" id="GO:0048167">
    <property type="term" value="P:regulation of synaptic plasticity"/>
    <property type="evidence" value="ECO:0000315"/>
    <property type="project" value="UniProtKB"/>
</dbReference>
<dbReference type="CDD" id="cd15251">
    <property type="entry name" value="7tmB2_BAI_Adhesion_VII"/>
    <property type="match status" value="1"/>
</dbReference>
<dbReference type="FunFam" id="1.20.1070.10:FF:000048">
    <property type="entry name" value="Adhesion G protein-coupled receptor B1"/>
    <property type="match status" value="1"/>
</dbReference>
<dbReference type="FunFam" id="2.60.220.50:FF:000016">
    <property type="entry name" value="Adhesion G protein-coupled receptor B1"/>
    <property type="match status" value="1"/>
</dbReference>
<dbReference type="FunFam" id="1.25.40.610:FF:000004">
    <property type="entry name" value="adhesion G protein-coupled receptor B1"/>
    <property type="match status" value="1"/>
</dbReference>
<dbReference type="FunFam" id="2.20.100.10:FF:000061">
    <property type="entry name" value="adhesion G protein-coupled receptor B1"/>
    <property type="match status" value="1"/>
</dbReference>
<dbReference type="FunFam" id="2.20.100.10:FF:000003">
    <property type="entry name" value="Adhesion G protein-coupled receptor B2"/>
    <property type="match status" value="2"/>
</dbReference>
<dbReference type="FunFam" id="2.20.100.10:FF:000004">
    <property type="entry name" value="Adhesion G protein-coupled receptor B2"/>
    <property type="match status" value="2"/>
</dbReference>
<dbReference type="FunFam" id="4.10.1240.10:FF:000002">
    <property type="entry name" value="Adhesion G protein-coupled receptor B2"/>
    <property type="match status" value="1"/>
</dbReference>
<dbReference type="Gene3D" id="1.25.40.610">
    <property type="match status" value="1"/>
</dbReference>
<dbReference type="Gene3D" id="2.60.220.50">
    <property type="match status" value="1"/>
</dbReference>
<dbReference type="Gene3D" id="4.10.1240.10">
    <property type="entry name" value="GPCR, family 2, extracellular hormone receptor domain"/>
    <property type="match status" value="1"/>
</dbReference>
<dbReference type="Gene3D" id="1.20.1070.10">
    <property type="entry name" value="Rhodopsin 7-helix transmembrane proteins"/>
    <property type="match status" value="1"/>
</dbReference>
<dbReference type="Gene3D" id="2.20.100.10">
    <property type="entry name" value="Thrombospondin type-1 (TSP1) repeat"/>
    <property type="match status" value="5"/>
</dbReference>
<dbReference type="InterPro" id="IPR043838">
    <property type="entry name" value="AGRB_N"/>
</dbReference>
<dbReference type="InterPro" id="IPR057244">
    <property type="entry name" value="GAIN_B"/>
</dbReference>
<dbReference type="InterPro" id="IPR032471">
    <property type="entry name" value="GAIN_dom_N"/>
</dbReference>
<dbReference type="InterPro" id="IPR046338">
    <property type="entry name" value="GAIN_dom_sf"/>
</dbReference>
<dbReference type="InterPro" id="IPR017981">
    <property type="entry name" value="GPCR_2-like_7TM"/>
</dbReference>
<dbReference type="InterPro" id="IPR008077">
    <property type="entry name" value="GPCR_2_brain_angio_inhib"/>
</dbReference>
<dbReference type="InterPro" id="IPR036445">
    <property type="entry name" value="GPCR_2_extracell_dom_sf"/>
</dbReference>
<dbReference type="InterPro" id="IPR001879">
    <property type="entry name" value="GPCR_2_extracellular_dom"/>
</dbReference>
<dbReference type="InterPro" id="IPR000832">
    <property type="entry name" value="GPCR_2_secretin-like"/>
</dbReference>
<dbReference type="InterPro" id="IPR000203">
    <property type="entry name" value="GPS"/>
</dbReference>
<dbReference type="InterPro" id="IPR000884">
    <property type="entry name" value="TSP1_rpt"/>
</dbReference>
<dbReference type="InterPro" id="IPR036383">
    <property type="entry name" value="TSP1_rpt_sf"/>
</dbReference>
<dbReference type="PANTHER" id="PTHR12011:SF39">
    <property type="entry name" value="ADHESION G PROTEIN-COUPLED RECEPTOR B1"/>
    <property type="match status" value="1"/>
</dbReference>
<dbReference type="PANTHER" id="PTHR12011">
    <property type="entry name" value="ADHESION G-PROTEIN COUPLED RECEPTOR"/>
    <property type="match status" value="1"/>
</dbReference>
<dbReference type="Pfam" id="PF00002">
    <property type="entry name" value="7tm_2"/>
    <property type="match status" value="1"/>
</dbReference>
<dbReference type="Pfam" id="PF19188">
    <property type="entry name" value="AGRB_N"/>
    <property type="match status" value="1"/>
</dbReference>
<dbReference type="Pfam" id="PF16489">
    <property type="entry name" value="GAIN"/>
    <property type="match status" value="1"/>
</dbReference>
<dbReference type="Pfam" id="PF01825">
    <property type="entry name" value="GPS"/>
    <property type="match status" value="1"/>
</dbReference>
<dbReference type="Pfam" id="PF02793">
    <property type="entry name" value="HRM"/>
    <property type="match status" value="1"/>
</dbReference>
<dbReference type="Pfam" id="PF00090">
    <property type="entry name" value="TSP_1"/>
    <property type="match status" value="5"/>
</dbReference>
<dbReference type="PRINTS" id="PR01694">
    <property type="entry name" value="BAIPRECURSOR"/>
</dbReference>
<dbReference type="PRINTS" id="PR00249">
    <property type="entry name" value="GPCRSECRETIN"/>
</dbReference>
<dbReference type="PRINTS" id="PR01705">
    <property type="entry name" value="TSP1REPEAT"/>
</dbReference>
<dbReference type="SMART" id="SM00303">
    <property type="entry name" value="GPS"/>
    <property type="match status" value="1"/>
</dbReference>
<dbReference type="SMART" id="SM00008">
    <property type="entry name" value="HormR"/>
    <property type="match status" value="1"/>
</dbReference>
<dbReference type="SMART" id="SM00209">
    <property type="entry name" value="TSP1"/>
    <property type="match status" value="5"/>
</dbReference>
<dbReference type="SUPFAM" id="SSF82895">
    <property type="entry name" value="TSP-1 type 1 repeat"/>
    <property type="match status" value="5"/>
</dbReference>
<dbReference type="PROSITE" id="PS50227">
    <property type="entry name" value="G_PROTEIN_RECEP_F2_3"/>
    <property type="match status" value="1"/>
</dbReference>
<dbReference type="PROSITE" id="PS50261">
    <property type="entry name" value="G_PROTEIN_RECEP_F2_4"/>
    <property type="match status" value="1"/>
</dbReference>
<dbReference type="PROSITE" id="PS50221">
    <property type="entry name" value="GAIN_B"/>
    <property type="match status" value="1"/>
</dbReference>
<dbReference type="PROSITE" id="PS50092">
    <property type="entry name" value="TSP1"/>
    <property type="match status" value="5"/>
</dbReference>
<reference key="1">
    <citation type="journal article" date="2001" name="Brain Res. Mol. Brain Res.">
        <title>Characterization of mouse brain-specific angiogenesis inhibitor 1 (BAI1) and phytanoyl-CoA alpha-hydroxylase-associated protein 1, a novel BAI1-binding protein.</title>
        <authorList>
            <person name="Koh J.T."/>
            <person name="Lee Z.H."/>
            <person name="Ahn K.Y."/>
            <person name="Kim J.-K."/>
            <person name="Bae C.S."/>
            <person name="Kim H.-H."/>
            <person name="Kee H.J."/>
            <person name="Kim K.K."/>
        </authorList>
    </citation>
    <scope>NUCLEOTIDE SEQUENCE [MRNA]</scope>
    <scope>TISSUE SPECIFICITY</scope>
    <scope>INTERACTION WITH PHYHIP</scope>
    <source>
        <strain>ICR</strain>
        <tissue>Brain</tissue>
    </source>
</reference>
<reference key="2">
    <citation type="journal article" date="2005" name="Science">
        <title>The transcriptional landscape of the mammalian genome.</title>
        <authorList>
            <person name="Carninci P."/>
            <person name="Kasukawa T."/>
            <person name="Katayama S."/>
            <person name="Gough J."/>
            <person name="Frith M.C."/>
            <person name="Maeda N."/>
            <person name="Oyama R."/>
            <person name="Ravasi T."/>
            <person name="Lenhard B."/>
            <person name="Wells C."/>
            <person name="Kodzius R."/>
            <person name="Shimokawa K."/>
            <person name="Bajic V.B."/>
            <person name="Brenner S.E."/>
            <person name="Batalov S."/>
            <person name="Forrest A.R."/>
            <person name="Zavolan M."/>
            <person name="Davis M.J."/>
            <person name="Wilming L.G."/>
            <person name="Aidinis V."/>
            <person name="Allen J.E."/>
            <person name="Ambesi-Impiombato A."/>
            <person name="Apweiler R."/>
            <person name="Aturaliya R.N."/>
            <person name="Bailey T.L."/>
            <person name="Bansal M."/>
            <person name="Baxter L."/>
            <person name="Beisel K.W."/>
            <person name="Bersano T."/>
            <person name="Bono H."/>
            <person name="Chalk A.M."/>
            <person name="Chiu K.P."/>
            <person name="Choudhary V."/>
            <person name="Christoffels A."/>
            <person name="Clutterbuck D.R."/>
            <person name="Crowe M.L."/>
            <person name="Dalla E."/>
            <person name="Dalrymple B.P."/>
            <person name="de Bono B."/>
            <person name="Della Gatta G."/>
            <person name="di Bernardo D."/>
            <person name="Down T."/>
            <person name="Engstrom P."/>
            <person name="Fagiolini M."/>
            <person name="Faulkner G."/>
            <person name="Fletcher C.F."/>
            <person name="Fukushima T."/>
            <person name="Furuno M."/>
            <person name="Futaki S."/>
            <person name="Gariboldi M."/>
            <person name="Georgii-Hemming P."/>
            <person name="Gingeras T.R."/>
            <person name="Gojobori T."/>
            <person name="Green R.E."/>
            <person name="Gustincich S."/>
            <person name="Harbers M."/>
            <person name="Hayashi Y."/>
            <person name="Hensch T.K."/>
            <person name="Hirokawa N."/>
            <person name="Hill D."/>
            <person name="Huminiecki L."/>
            <person name="Iacono M."/>
            <person name="Ikeo K."/>
            <person name="Iwama A."/>
            <person name="Ishikawa T."/>
            <person name="Jakt M."/>
            <person name="Kanapin A."/>
            <person name="Katoh M."/>
            <person name="Kawasawa Y."/>
            <person name="Kelso J."/>
            <person name="Kitamura H."/>
            <person name="Kitano H."/>
            <person name="Kollias G."/>
            <person name="Krishnan S.P."/>
            <person name="Kruger A."/>
            <person name="Kummerfeld S.K."/>
            <person name="Kurochkin I.V."/>
            <person name="Lareau L.F."/>
            <person name="Lazarevic D."/>
            <person name="Lipovich L."/>
            <person name="Liu J."/>
            <person name="Liuni S."/>
            <person name="McWilliam S."/>
            <person name="Madan Babu M."/>
            <person name="Madera M."/>
            <person name="Marchionni L."/>
            <person name="Matsuda H."/>
            <person name="Matsuzawa S."/>
            <person name="Miki H."/>
            <person name="Mignone F."/>
            <person name="Miyake S."/>
            <person name="Morris K."/>
            <person name="Mottagui-Tabar S."/>
            <person name="Mulder N."/>
            <person name="Nakano N."/>
            <person name="Nakauchi H."/>
            <person name="Ng P."/>
            <person name="Nilsson R."/>
            <person name="Nishiguchi S."/>
            <person name="Nishikawa S."/>
            <person name="Nori F."/>
            <person name="Ohara O."/>
            <person name="Okazaki Y."/>
            <person name="Orlando V."/>
            <person name="Pang K.C."/>
            <person name="Pavan W.J."/>
            <person name="Pavesi G."/>
            <person name="Pesole G."/>
            <person name="Petrovsky N."/>
            <person name="Piazza S."/>
            <person name="Reed J."/>
            <person name="Reid J.F."/>
            <person name="Ring B.Z."/>
            <person name="Ringwald M."/>
            <person name="Rost B."/>
            <person name="Ruan Y."/>
            <person name="Salzberg S.L."/>
            <person name="Sandelin A."/>
            <person name="Schneider C."/>
            <person name="Schoenbach C."/>
            <person name="Sekiguchi K."/>
            <person name="Semple C.A."/>
            <person name="Seno S."/>
            <person name="Sessa L."/>
            <person name="Sheng Y."/>
            <person name="Shibata Y."/>
            <person name="Shimada H."/>
            <person name="Shimada K."/>
            <person name="Silva D."/>
            <person name="Sinclair B."/>
            <person name="Sperling S."/>
            <person name="Stupka E."/>
            <person name="Sugiura K."/>
            <person name="Sultana R."/>
            <person name="Takenaka Y."/>
            <person name="Taki K."/>
            <person name="Tammoja K."/>
            <person name="Tan S.L."/>
            <person name="Tang S."/>
            <person name="Taylor M.S."/>
            <person name="Tegner J."/>
            <person name="Teichmann S.A."/>
            <person name="Ueda H.R."/>
            <person name="van Nimwegen E."/>
            <person name="Verardo R."/>
            <person name="Wei C.L."/>
            <person name="Yagi K."/>
            <person name="Yamanishi H."/>
            <person name="Zabarovsky E."/>
            <person name="Zhu S."/>
            <person name="Zimmer A."/>
            <person name="Hide W."/>
            <person name="Bult C."/>
            <person name="Grimmond S.M."/>
            <person name="Teasdale R.D."/>
            <person name="Liu E.T."/>
            <person name="Brusic V."/>
            <person name="Quackenbush J."/>
            <person name="Wahlestedt C."/>
            <person name="Mattick J.S."/>
            <person name="Hume D.A."/>
            <person name="Kai C."/>
            <person name="Sasaki D."/>
            <person name="Tomaru Y."/>
            <person name="Fukuda S."/>
            <person name="Kanamori-Katayama M."/>
            <person name="Suzuki M."/>
            <person name="Aoki J."/>
            <person name="Arakawa T."/>
            <person name="Iida J."/>
            <person name="Imamura K."/>
            <person name="Itoh M."/>
            <person name="Kato T."/>
            <person name="Kawaji H."/>
            <person name="Kawagashira N."/>
            <person name="Kawashima T."/>
            <person name="Kojima M."/>
            <person name="Kondo S."/>
            <person name="Konno H."/>
            <person name="Nakano K."/>
            <person name="Ninomiya N."/>
            <person name="Nishio T."/>
            <person name="Okada M."/>
            <person name="Plessy C."/>
            <person name="Shibata K."/>
            <person name="Shiraki T."/>
            <person name="Suzuki S."/>
            <person name="Tagami M."/>
            <person name="Waki K."/>
            <person name="Watahiki A."/>
            <person name="Okamura-Oho Y."/>
            <person name="Suzuki H."/>
            <person name="Kawai J."/>
            <person name="Hayashizaki Y."/>
        </authorList>
    </citation>
    <scope>NUCLEOTIDE SEQUENCE [LARGE SCALE MRNA]</scope>
    <source>
        <strain>C57BL/6J</strain>
        <tissue>Brain</tissue>
    </source>
</reference>
<reference key="3">
    <citation type="submission" date="2009-01" db="UniProtKB">
        <authorList>
            <person name="Lubec G."/>
            <person name="Sunyer B."/>
            <person name="Chen W.-Q."/>
        </authorList>
    </citation>
    <scope>PROTEIN SEQUENCE OF 1255-1268</scope>
    <scope>IDENTIFICATION BY MASS SPECTROMETRY</scope>
    <source>
        <strain>OF1</strain>
        <tissue>Hippocampus</tissue>
    </source>
</reference>
<reference key="4">
    <citation type="journal article" date="2002" name="Br. J. Cancer">
        <title>Overexpression of the p53-inducible brain-specific angiogenesis inhibitor 1 suppresses efficiently tumour angiogenesis.</title>
        <authorList>
            <person name="Duda D.G."/>
            <person name="Sunamura M."/>
            <person name="Lozonschi L."/>
            <person name="Yokoyama T."/>
            <person name="Yatsuoka T."/>
            <person name="Motoi F."/>
            <person name="Horii A."/>
            <person name="Tani K."/>
            <person name="Asano S."/>
            <person name="Nakamura Y."/>
            <person name="Matsuno S."/>
        </authorList>
    </citation>
    <scope>FUNCTION</scope>
</reference>
<reference key="5">
    <citation type="journal article" date="2007" name="Nature">
        <title>BAI1 is an engulfment receptor for apoptotic cells upstream of the ELMO/Dock180/Rac module.</title>
        <authorList>
            <person name="Park D."/>
            <person name="Tosello-Trampont A.-C."/>
            <person name="Elliott M.R."/>
            <person name="Lu M."/>
            <person name="Haney L.B."/>
            <person name="Ma Z."/>
            <person name="Klibanov A.L."/>
            <person name="Mandell J.W."/>
            <person name="Ravichandran K.S."/>
        </authorList>
    </citation>
    <scope>FUNCTION</scope>
    <scope>INTERACTION WITH ELMO1 AND DOCK1</scope>
    <scope>SUBCELLULAR LOCATION</scope>
    <scope>TISSUE SPECIFICITY</scope>
    <scope>DOMAIN</scope>
    <scope>MUTAGENESIS OF 1487-ARG--ARG-1489</scope>
</reference>
<reference key="6">
    <citation type="journal article" date="2010" name="Cell">
        <title>A tissue-specific atlas of mouse protein phosphorylation and expression.</title>
        <authorList>
            <person name="Huttlin E.L."/>
            <person name="Jedrychowski M.P."/>
            <person name="Elias J.E."/>
            <person name="Goswami T."/>
            <person name="Rad R."/>
            <person name="Beausoleil S.A."/>
            <person name="Villen J."/>
            <person name="Haas W."/>
            <person name="Sowa M.E."/>
            <person name="Gygi S.P."/>
        </authorList>
    </citation>
    <scope>PHOSPHORYLATION [LARGE SCALE ANALYSIS] AT SER-1467</scope>
    <scope>IDENTIFICATION BY MASS SPECTROMETRY [LARGE SCALE ANALYSIS]</scope>
    <source>
        <tissue>Brain</tissue>
    </source>
</reference>
<reference key="7">
    <citation type="journal article" date="2011" name="Brain Behav. Immun.">
        <title>Brain-specific angiogenesis inhibitor-1 expression in astrocytes and neurons: implications for its dual function as an apoptotic engulfment receptor.</title>
        <authorList>
            <person name="Sokolowski J.D."/>
            <person name="Nobles S.L."/>
            <person name="Heffron D.S."/>
            <person name="Park D."/>
            <person name="Ravichandran K.S."/>
            <person name="Mandell J.W."/>
        </authorList>
    </citation>
    <scope>TISSUE SPECIFICITY</scope>
</reference>
<reference key="8">
    <citation type="journal article" date="2011" name="Proc. Natl. Acad. Sci. U.S.A.">
        <title>Brain angiogenesis inhibitor 1 (BAI1) is a pattern recognition receptor that mediates macrophage binding and engulfment of Gram-negative bacteria.</title>
        <authorList>
            <person name="Das S."/>
            <person name="Owen K.A."/>
            <person name="Ly K.T."/>
            <person name="Park D."/>
            <person name="Black S.G."/>
            <person name="Wilson J.M."/>
            <person name="Sifri C.D."/>
            <person name="Ravichandran K.S."/>
            <person name="Ernst P.B."/>
            <person name="Casanova J.E."/>
        </authorList>
    </citation>
    <scope>FUNCTION</scope>
    <scope>DOMAIN</scope>
</reference>
<reference key="9">
    <citation type="journal article" date="2013" name="J. Biol. Chem.">
        <title>Brain-specific angiogenesis inhibitor-1 signaling, regulation, and enrichment in the postsynaptic density.</title>
        <authorList>
            <person name="Stephenson J.R."/>
            <person name="Paavola K.J."/>
            <person name="Schaefer S.A."/>
            <person name="Kaur B."/>
            <person name="Van Meir E.G."/>
            <person name="Hall R.A."/>
        </authorList>
    </citation>
    <scope>SUBCELLULAR LOCATION</scope>
</reference>
<reference key="10">
    <citation type="journal article" date="2013" name="J. Neurosci.">
        <title>The adhesion-GPCR BAI1 regulates synaptogenesis by controlling the recruitment of the Par3/Tiam1 polarity complex to synaptic sites.</title>
        <authorList>
            <person name="Duman J.G."/>
            <person name="Tzeng C.P."/>
            <person name="Tu Y.K."/>
            <person name="Munjal T."/>
            <person name="Schwechter B."/>
            <person name="Ho T.S."/>
            <person name="Tolias K.F."/>
        </authorList>
    </citation>
    <scope>TISSUE SPECIFICITY</scope>
    <scope>DISRUPTION PHENOTYPE</scope>
</reference>
<reference key="11">
    <citation type="journal article" date="2013" name="Nature">
        <title>Phosphatidylserine receptor BAI1 and apoptotic cells as new promoters of myoblast fusion.</title>
        <authorList>
            <person name="Hochreiter-Hufford A.E."/>
            <person name="Lee C.S."/>
            <person name="Kinchen J.M."/>
            <person name="Sokolowski J.D."/>
            <person name="Arandjelovic S."/>
            <person name="Call J.A."/>
            <person name="Klibanov A.L."/>
            <person name="Yan Z."/>
            <person name="Mandell J.W."/>
            <person name="Ravichandran K.S."/>
        </authorList>
    </citation>
    <scope>FUNCTION</scope>
    <scope>DISRUPTION PHENOTYPE</scope>
</reference>
<reference key="12">
    <citation type="journal article" date="2015" name="J. Clin. Invest.">
        <title>BAI1 regulates spatial learning and synaptic plasticity in the hippocampus.</title>
        <authorList>
            <person name="Zhu D."/>
            <person name="Li C."/>
            <person name="Swanson A.M."/>
            <person name="Villalba R.M."/>
            <person name="Guo J."/>
            <person name="Zhang Z."/>
            <person name="Matheny S."/>
            <person name="Murakami T."/>
            <person name="Stephenson J.R."/>
            <person name="Daniel S."/>
            <person name="Fukata M."/>
            <person name="Hall R.A."/>
            <person name="Olson J.J."/>
            <person name="Neigh G.N."/>
            <person name="Smith Y."/>
            <person name="Rainnie D.G."/>
            <person name="Van Meir E.G."/>
        </authorList>
    </citation>
    <scope>FUNCTION</scope>
    <scope>INTERACTION WITH MDM2</scope>
    <scope>DISRUPTION PHENOTYPE</scope>
</reference>
<reference key="13">
    <citation type="journal article" date="2016" name="Sci. Signal.">
        <title>The adhesion GPCR BAI1 mediates macrophage ROS production and microbicidal activity against Gram-negative bacteria.</title>
        <authorList>
            <person name="Billings E.A."/>
            <person name="Lee C.S."/>
            <person name="Owen K.A."/>
            <person name="D'Souza R.S."/>
            <person name="Ravichandran K.S."/>
            <person name="Casanova J.E."/>
        </authorList>
    </citation>
    <scope>FUNCTION</scope>
    <scope>DISRUPTION PHENOTYPE</scope>
</reference>
<accession>Q3UHD1</accession>
<accession>Q3UH36</accession>
<accession>Q8CGM0</accession>
<keyword id="KW-0002">3D-structure</keyword>
<keyword id="KW-0025">Alternative splicing</keyword>
<keyword id="KW-0965">Cell junction</keyword>
<keyword id="KW-1003">Cell membrane</keyword>
<keyword id="KW-0966">Cell projection</keyword>
<keyword id="KW-0903">Direct protein sequencing</keyword>
<keyword id="KW-1015">Disulfide bond</keyword>
<keyword id="KW-0297">G-protein coupled receptor</keyword>
<keyword id="KW-0325">Glycoprotein</keyword>
<keyword id="KW-0391">Immunity</keyword>
<keyword id="KW-0399">Innate immunity</keyword>
<keyword id="KW-0472">Membrane</keyword>
<keyword id="KW-0517">Myogenesis</keyword>
<keyword id="KW-0524">Neurogenesis</keyword>
<keyword id="KW-0581">Phagocytosis</keyword>
<keyword id="KW-0597">Phosphoprotein</keyword>
<keyword id="KW-0675">Receptor</keyword>
<keyword id="KW-1185">Reference proteome</keyword>
<keyword id="KW-0677">Repeat</keyword>
<keyword id="KW-0964">Secreted</keyword>
<keyword id="KW-0732">Signal</keyword>
<keyword id="KW-0770">Synapse</keyword>
<keyword id="KW-0807">Transducer</keyword>
<keyword id="KW-0812">Transmembrane</keyword>
<keyword id="KW-1133">Transmembrane helix</keyword>
<keyword id="KW-0832">Ubl conjugation</keyword>
<evidence type="ECO:0000250" key="1">
    <source>
        <dbReference type="UniProtKB" id="C0HL12"/>
    </source>
</evidence>
<evidence type="ECO:0000250" key="2">
    <source>
        <dbReference type="UniProtKB" id="O14514"/>
    </source>
</evidence>
<evidence type="ECO:0000255" key="3"/>
<evidence type="ECO:0000255" key="4">
    <source>
        <dbReference type="PROSITE-ProRule" id="PRU00098"/>
    </source>
</evidence>
<evidence type="ECO:0000255" key="5">
    <source>
        <dbReference type="PROSITE-ProRule" id="PRU00210"/>
    </source>
</evidence>
<evidence type="ECO:0000256" key="6">
    <source>
        <dbReference type="SAM" id="MobiDB-lite"/>
    </source>
</evidence>
<evidence type="ECO:0000269" key="7">
    <source>
    </source>
</evidence>
<evidence type="ECO:0000269" key="8">
    <source>
    </source>
</evidence>
<evidence type="ECO:0000269" key="9">
    <source>
    </source>
</evidence>
<evidence type="ECO:0000269" key="10">
    <source>
    </source>
</evidence>
<evidence type="ECO:0000269" key="11">
    <source>
    </source>
</evidence>
<evidence type="ECO:0000269" key="12">
    <source>
    </source>
</evidence>
<evidence type="ECO:0000269" key="13">
    <source>
    </source>
</evidence>
<evidence type="ECO:0000269" key="14">
    <source>
    </source>
</evidence>
<evidence type="ECO:0000269" key="15">
    <source>
    </source>
</evidence>
<evidence type="ECO:0000269" key="16">
    <source>
    </source>
</evidence>
<evidence type="ECO:0000303" key="17">
    <source>
    </source>
</evidence>
<evidence type="ECO:0000305" key="18"/>
<evidence type="ECO:0000312" key="19">
    <source>
        <dbReference type="MGI" id="MGI:1933736"/>
    </source>
</evidence>
<evidence type="ECO:0007744" key="20">
    <source>
    </source>
</evidence>
<evidence type="ECO:0007829" key="21">
    <source>
        <dbReference type="PDB" id="6IDX"/>
    </source>
</evidence>
<evidence type="ECO:0007829" key="22">
    <source>
        <dbReference type="PDB" id="7R84"/>
    </source>
</evidence>
<organism>
    <name type="scientific">Mus musculus</name>
    <name type="common">Mouse</name>
    <dbReference type="NCBI Taxonomy" id="10090"/>
    <lineage>
        <taxon>Eukaryota</taxon>
        <taxon>Metazoa</taxon>
        <taxon>Chordata</taxon>
        <taxon>Craniata</taxon>
        <taxon>Vertebrata</taxon>
        <taxon>Euteleostomi</taxon>
        <taxon>Mammalia</taxon>
        <taxon>Eutheria</taxon>
        <taxon>Euarchontoglires</taxon>
        <taxon>Glires</taxon>
        <taxon>Rodentia</taxon>
        <taxon>Myomorpha</taxon>
        <taxon>Muroidea</taxon>
        <taxon>Muridae</taxon>
        <taxon>Murinae</taxon>
        <taxon>Mus</taxon>
        <taxon>Mus</taxon>
    </lineage>
</organism>
<comment type="function">
    <text evidence="1 2 8 9 11 13 15 16">Phosphatidylserine receptor which enhances the engulfment of apoptotic cells (PubMed:17960134). Also mediates the binding and engulfment of Gram-negative bacteria (PubMed:21245295, PubMed:26838550). Stimulates production of reactive oxygen species by macrophages in response to Gram-negative bacteria, resulting in enhanced microbicidal macrophage activity (By similarity). In the gastric mucosa, required for recognition and engulfment of apoptotic gastric epithelial cells (By similarity). Promotes myoblast fusion (PubMed:23615608). Activates the Rho pathway in a G-protein-dependent manner (By similarity). Inhibits MDM2-mediated ubiquitination and degradation of DLG4/PSD95, promoting DLG4 stability and regulating synaptic plasticity (PubMed:25751059). Required for the formation of dendritic spines by ensuring the correct localization of PARD3 and TIAM1 (By similarity). Potent inhibitor of angiogenesis in brain and may play a significant role as a mediator of the p53/TP53 signal in suppression of glioblastoma (By similarity).</text>
</comment>
<comment type="function">
    <molecule>Vasculostatin-120</molecule>
    <text evidence="2">Inhibits angiogenesis in a CD36-dependent manner.</text>
</comment>
<comment type="function">
    <molecule>Vasculostatin-40</molecule>
    <text evidence="2">Inhibits angiogenesis.</text>
</comment>
<comment type="subunit">
    <text evidence="1 2 7 9 15">Interacts with ELMO1 and DOCK1 (PubMed:17960134). When bound to ELMO1 and DOCK1, acts as a module to promote apoptotic cell engulfment (PubMed:17960134). Interacts with MDM2; the interaction results in inhibition of MDM2-mediated ubiquitination and degradation of DLG4/PSD95 (PubMed:25751059). Interacts with PARD3 and TIAM1; the interaction is required for correct dendritic localization of PARD3 and TIAM1 and for dendritic spine formation (By similarity). Interacts with MAGI1, MAGI3 and BAIAP2 (By similarity). Interacts with PHYHIP (PubMed:11245925). Interacts with DLG4 (via PDZ domain) (By similarity). Vasculostatin-120: Interacts with CD36 (By similarity). Vasculostatin-120: Interacts with ARRB2 (By similarity). Interacts with BAIAP3; this interaction is direct (By similarity).</text>
</comment>
<comment type="interaction">
    <interactant intactId="EBI-911280">
        <id>Q3UHD1</id>
    </interactant>
    <interactant intactId="EBI-15668002">
        <id>Q92556-1</id>
        <label>ELMO1</label>
    </interactant>
    <organismsDiffer>true</organismsDiffer>
    <experiments>9</experiments>
</comment>
<comment type="subcellular location">
    <subcellularLocation>
        <location evidence="9 10">Cell membrane</location>
        <topology evidence="3">Multi-pass membrane protein</topology>
    </subcellularLocation>
    <subcellularLocation>
        <location evidence="9">Cell projection</location>
        <location evidence="9">Phagocytic cup</location>
    </subcellularLocation>
    <subcellularLocation>
        <location evidence="10">Cell junction</location>
        <location evidence="10">Focal adhesion</location>
    </subcellularLocation>
    <subcellularLocation>
        <location evidence="1">Cell projection</location>
        <location evidence="1">Dendritic spine</location>
    </subcellularLocation>
    <subcellularLocation>
        <location evidence="12 14">Postsynaptic density</location>
    </subcellularLocation>
</comment>
<comment type="subcellular location">
    <molecule>Vasculostatin-120</molecule>
    <subcellularLocation>
        <location evidence="2">Secreted</location>
    </subcellularLocation>
</comment>
<comment type="subcellular location">
    <molecule>Vasculostatin-40</molecule>
    <subcellularLocation>
        <location evidence="2">Secreted</location>
    </subcellularLocation>
</comment>
<comment type="alternative products">
    <event type="alternative splicing"/>
    <isoform>
        <id>Q3UHD1-1</id>
        <name>1</name>
        <sequence type="displayed"/>
    </isoform>
    <isoform>
        <id>Q3UHD1-2</id>
        <name>2</name>
        <sequence type="not described"/>
    </isoform>
</comment>
<comment type="tissue specificity">
    <text evidence="7 9 10 12">In brain, widespread expression in all neuropil-rich zones including spinal cord gray matter, cerebellar molecular layer, cerebral cortex, thalamic nuclei and basal ganglia with no expression in white matter (at protein level) (PubMed:20888903). In the cerebellar molecular layer, highly expressed in interneuron processes whereas Purkinje cells and their dendrites show weaker expression (at protein level) (PubMed:20888903). In the olfactory bulb, highly expressed in glomeruli (at protein level) (PubMed:20888903). In the retina, highly concentrated in the outer and inner plexiform layers (at protein level) (PubMed:20888903). Expressed in brain (PubMed:11245925). Enriched in hippocampus and cortex (PubMed:23595754). Also detected in other tissues including bone marrow and spleen (PubMed:17960134).</text>
</comment>
<comment type="domain">
    <text evidence="9 11">The TSP type-1 repeats in the extracellular domain mediate binding to phosphatidylserine (PubMed:17960134). They are also required for bacterial recognition and binding to bacterial outer membrane lipopolysaccharide (PubMed:21245295).</text>
</comment>
<comment type="PTM">
    <text evidence="2">Proteolytically cleaved to produce vasculostatin-40 and vasculostatin-120. Vasculostatin-40 is the major form and is produced through proteolytic cleavage by MMP14 between residues 321 and 329 with cleavage likely to be between Ser-326 and Leu-327.</text>
</comment>
<comment type="PTM">
    <text evidence="2">Ubiquitinated.</text>
</comment>
<comment type="disruption phenotype">
    <text evidence="12 13 15 16">Viable and fertile with normal brain anatomy but mutants display severe deficits in hippocampus-dependent spatial learning and memory that are accompanied by enhanced long-term potentiation, impaired long-term depression, a thinning of the postsynaptic density at hippocampal synapses, reduced protein levels of Dlg4 and increased Dlg4 polyubiquitination (PubMed:25751059). Smaller myofibers than wild-type animals and impaired muscle regeneration after injury (PubMed:23615608). Impaired bacterial clearance following E.coli infection (PubMed:26838550). RNAi-mediated knockdown in embryos results in greatly reduced dendritic spine density and small but significant increases in spine length and decreases in spine diameter (PubMed:23595754).</text>
</comment>
<comment type="miscellaneous">
    <molecule>Isoform 2</molecule>
    <text evidence="18">Observed very weakly in the kidney, skeletal muscle, skin, stomach, thymus and brain from embryonic day 18. By neonatal day 1, the expression is targeted only to the brain.</text>
</comment>
<comment type="similarity">
    <text evidence="18">Belongs to the G-protein coupled receptor 2 family. LN-TM7 subfamily.</text>
</comment>
<gene>
    <name evidence="19" type="primary">Adgrb1</name>
    <name evidence="17" type="synonym">Bai1</name>
</gene>
<name>AGRB1_MOUSE</name>
<proteinExistence type="evidence at protein level"/>
<feature type="signal peptide" evidence="3">
    <location>
        <begin position="1"/>
        <end position="33"/>
    </location>
</feature>
<feature type="chain" id="PRO_0000245046" description="Adhesion G protein-coupled receptor B1">
    <location>
        <begin position="34"/>
        <end position="1582"/>
    </location>
</feature>
<feature type="chain" id="PRO_0000441807" description="Vasculostatin-120" evidence="2">
    <location>
        <begin position="34"/>
        <end position="926"/>
    </location>
</feature>
<feature type="chain" id="PRO_0000441806" description="Vasculostatin-40" evidence="2">
    <location>
        <begin position="34"/>
        <end position="327"/>
    </location>
</feature>
<feature type="topological domain" description="Extracellular" evidence="3">
    <location>
        <begin position="34"/>
        <end position="948"/>
    </location>
</feature>
<feature type="transmembrane region" description="Helical; Name=1" evidence="3">
    <location>
        <begin position="949"/>
        <end position="969"/>
    </location>
</feature>
<feature type="topological domain" description="Cytoplasmic" evidence="3">
    <location>
        <begin position="970"/>
        <end position="980"/>
    </location>
</feature>
<feature type="transmembrane region" description="Helical; Name=2" evidence="3">
    <location>
        <begin position="981"/>
        <end position="1001"/>
    </location>
</feature>
<feature type="topological domain" description="Extracellular" evidence="3">
    <location>
        <begin position="1002"/>
        <end position="1008"/>
    </location>
</feature>
<feature type="transmembrane region" description="Helical; Name=3" evidence="3">
    <location>
        <begin position="1009"/>
        <end position="1029"/>
    </location>
</feature>
<feature type="topological domain" description="Cytoplasmic" evidence="3">
    <location>
        <begin position="1030"/>
        <end position="1052"/>
    </location>
</feature>
<feature type="transmembrane region" description="Helical; Name=4" evidence="3">
    <location>
        <begin position="1053"/>
        <end position="1073"/>
    </location>
</feature>
<feature type="topological domain" description="Extracellular" evidence="3">
    <location>
        <begin position="1074"/>
        <end position="1093"/>
    </location>
</feature>
<feature type="transmembrane region" description="Helical; Name=5" evidence="3">
    <location>
        <begin position="1094"/>
        <end position="1114"/>
    </location>
</feature>
<feature type="topological domain" description="Cytoplasmic" evidence="3">
    <location>
        <begin position="1115"/>
        <end position="1136"/>
    </location>
</feature>
<feature type="transmembrane region" description="Helical; Name=6" evidence="3">
    <location>
        <begin position="1137"/>
        <end position="1157"/>
    </location>
</feature>
<feature type="topological domain" description="Extracellular" evidence="3">
    <location>
        <begin position="1158"/>
        <end position="1166"/>
    </location>
</feature>
<feature type="transmembrane region" description="Helical; Name=7" evidence="3">
    <location>
        <begin position="1167"/>
        <end position="1187"/>
    </location>
</feature>
<feature type="topological domain" description="Cytoplasmic" evidence="3">
    <location>
        <begin position="1188"/>
        <end position="1582"/>
    </location>
</feature>
<feature type="domain" description="TSP type-1 1" evidence="5">
    <location>
        <begin position="261"/>
        <end position="315"/>
    </location>
</feature>
<feature type="domain" description="TSP type-1 2" evidence="5">
    <location>
        <begin position="354"/>
        <end position="407"/>
    </location>
</feature>
<feature type="domain" description="TSP type-1 3" evidence="5">
    <location>
        <begin position="409"/>
        <end position="462"/>
    </location>
</feature>
<feature type="domain" description="TSP type-1 4" evidence="5">
    <location>
        <begin position="467"/>
        <end position="520"/>
    </location>
</feature>
<feature type="domain" description="TSP type-1 5" evidence="5">
    <location>
        <begin position="522"/>
        <end position="575"/>
    </location>
</feature>
<feature type="domain" description="GAIN-B" evidence="4">
    <location>
        <begin position="760"/>
        <end position="939"/>
    </location>
</feature>
<feature type="region of interest" description="Disordered" evidence="6">
    <location>
        <begin position="313"/>
        <end position="335"/>
    </location>
</feature>
<feature type="region of interest" description="GPS" evidence="4">
    <location>
        <begin position="884"/>
        <end position="939"/>
    </location>
</feature>
<feature type="region of interest" description="N-terminal stalk following vasculostatin-120 cleavage which is not required for signaling activity" evidence="2">
    <location>
        <begin position="927"/>
        <end position="943"/>
    </location>
</feature>
<feature type="region of interest" description="Involved in interaction with MAGI1" evidence="2">
    <location>
        <begin position="1363"/>
        <end position="1582"/>
    </location>
</feature>
<feature type="region of interest" description="Disordered" evidence="6">
    <location>
        <begin position="1382"/>
        <end position="1549"/>
    </location>
</feature>
<feature type="region of interest" description="Indispensable for interaction with MAGI1" evidence="2">
    <location>
        <begin position="1579"/>
        <end position="1582"/>
    </location>
</feature>
<feature type="compositionally biased region" description="Low complexity" evidence="6">
    <location>
        <begin position="319"/>
        <end position="329"/>
    </location>
</feature>
<feature type="compositionally biased region" description="Pro residues" evidence="6">
    <location>
        <begin position="1389"/>
        <end position="1435"/>
    </location>
</feature>
<feature type="compositionally biased region" description="Low complexity" evidence="6">
    <location>
        <begin position="1441"/>
        <end position="1455"/>
    </location>
</feature>
<feature type="compositionally biased region" description="Basic and acidic residues" evidence="6">
    <location>
        <begin position="1468"/>
        <end position="1484"/>
    </location>
</feature>
<feature type="compositionally biased region" description="Basic and acidic residues" evidence="6">
    <location>
        <begin position="1491"/>
        <end position="1520"/>
    </location>
</feature>
<feature type="site" description="Cleavage" evidence="2">
    <location>
        <begin position="926"/>
        <end position="927"/>
    </location>
</feature>
<feature type="modified residue" description="Phosphothreonine" evidence="2">
    <location>
        <position position="609"/>
    </location>
</feature>
<feature type="modified residue" description="Phosphoserine" evidence="20">
    <location>
        <position position="1467"/>
    </location>
</feature>
<feature type="glycosylation site" description="N-linked (GlcNAc...) asparagine" evidence="3">
    <location>
        <position position="64"/>
    </location>
</feature>
<feature type="glycosylation site" description="N-linked (GlcNAc...) asparagine" evidence="3">
    <location>
        <position position="401"/>
    </location>
</feature>
<feature type="glycosylation site" description="N-linked (GlcNAc...) asparagine" evidence="3">
    <location>
        <position position="607"/>
    </location>
</feature>
<feature type="glycosylation site" description="N-linked (GlcNAc...) asparagine" evidence="3">
    <location>
        <position position="692"/>
    </location>
</feature>
<feature type="glycosylation site" description="N-linked (GlcNAc...) asparagine" evidence="3">
    <location>
        <position position="844"/>
    </location>
</feature>
<feature type="glycosylation site" description="N-linked (GlcNAc...) asparagine" evidence="3">
    <location>
        <position position="877"/>
    </location>
</feature>
<feature type="glycosylation site" description="N-linked (GlcNAc...) asparagine" evidence="3">
    <location>
        <position position="881"/>
    </location>
</feature>
<feature type="disulfide bond" evidence="5">
    <location>
        <begin position="273"/>
        <end position="309"/>
    </location>
</feature>
<feature type="disulfide bond" evidence="5">
    <location>
        <begin position="277"/>
        <end position="314"/>
    </location>
</feature>
<feature type="disulfide bond" evidence="5">
    <location>
        <begin position="288"/>
        <end position="299"/>
    </location>
</feature>
<feature type="disulfide bond" evidence="5">
    <location>
        <begin position="366"/>
        <end position="400"/>
    </location>
</feature>
<feature type="disulfide bond" evidence="5">
    <location>
        <begin position="370"/>
        <end position="406"/>
    </location>
</feature>
<feature type="disulfide bond" evidence="5">
    <location>
        <begin position="381"/>
        <end position="390"/>
    </location>
</feature>
<feature type="disulfide bond" evidence="5">
    <location>
        <begin position="421"/>
        <end position="456"/>
    </location>
</feature>
<feature type="disulfide bond" evidence="5">
    <location>
        <begin position="425"/>
        <end position="461"/>
    </location>
</feature>
<feature type="disulfide bond" evidence="5">
    <location>
        <begin position="436"/>
        <end position="446"/>
    </location>
</feature>
<feature type="disulfide bond" evidence="5">
    <location>
        <begin position="479"/>
        <end position="514"/>
    </location>
</feature>
<feature type="disulfide bond" evidence="5">
    <location>
        <begin position="483"/>
        <end position="519"/>
    </location>
</feature>
<feature type="disulfide bond" evidence="5">
    <location>
        <begin position="494"/>
        <end position="504"/>
    </location>
</feature>
<feature type="disulfide bond" evidence="5">
    <location>
        <begin position="534"/>
        <end position="569"/>
    </location>
</feature>
<feature type="disulfide bond" evidence="5">
    <location>
        <begin position="538"/>
        <end position="574"/>
    </location>
</feature>
<feature type="disulfide bond" evidence="5">
    <location>
        <begin position="549"/>
        <end position="559"/>
    </location>
</feature>
<feature type="disulfide bond" evidence="5">
    <location>
        <begin position="581"/>
        <end position="616"/>
    </location>
</feature>
<feature type="disulfide bond" evidence="5">
    <location>
        <begin position="604"/>
        <end position="634"/>
    </location>
</feature>
<feature type="disulfide bond" evidence="4">
    <location>
        <begin position="884"/>
        <end position="921"/>
    </location>
</feature>
<feature type="disulfide bond" evidence="4">
    <location>
        <begin position="909"/>
        <end position="923"/>
    </location>
</feature>
<feature type="mutagenesis site" description="Reduced binding to ELMO1 and failure to promote engulfment of apoptotic thymocytes." evidence="9">
    <original>RKR</original>
    <variation>AAA</variation>
    <location>
        <begin position="1487"/>
        <end position="1489"/>
    </location>
</feature>
<feature type="sequence conflict" description="In Ref. 1; AAN86966." evidence="18" ref="1">
    <original>W</original>
    <variation>L</variation>
    <location>
        <position position="264"/>
    </location>
</feature>
<feature type="sequence conflict" description="In Ref. 1; AAN86966." evidence="18" ref="1">
    <original>RDCGGGLQTRTR</original>
    <variation>AGLRGRPANSNP</variation>
    <location>
        <begin position="275"/>
        <end position="286"/>
    </location>
</feature>
<feature type="sequence conflict" description="In Ref. 1; AAN86966." evidence="18" ref="1">
    <original>E</original>
    <variation>K</variation>
    <location>
        <position position="300"/>
    </location>
</feature>
<feature type="sequence conflict" description="In Ref. 2; BAE28021." evidence="18" ref="2">
    <original>D</original>
    <variation>G</variation>
    <location>
        <position position="821"/>
    </location>
</feature>
<feature type="strand" evidence="22">
    <location>
        <begin position="424"/>
        <end position="434"/>
    </location>
</feature>
<feature type="strand" evidence="22">
    <location>
        <begin position="450"/>
        <end position="456"/>
    </location>
</feature>
<feature type="turn" evidence="21">
    <location>
        <begin position="1474"/>
        <end position="1477"/>
    </location>
</feature>
<feature type="helix" evidence="21">
    <location>
        <begin position="1480"/>
        <end position="1484"/>
    </location>
</feature>
<feature type="helix" evidence="21">
    <location>
        <begin position="1486"/>
        <end position="1493"/>
    </location>
</feature>